<name>BIOB_LYSSC</name>
<feature type="chain" id="PRO_0000381449" description="Biotin synthase">
    <location>
        <begin position="1"/>
        <end position="331"/>
    </location>
</feature>
<feature type="domain" description="Radical SAM core" evidence="2">
    <location>
        <begin position="46"/>
        <end position="275"/>
    </location>
</feature>
<feature type="binding site" evidence="1">
    <location>
        <position position="64"/>
    </location>
    <ligand>
        <name>[4Fe-4S] cluster</name>
        <dbReference type="ChEBI" id="CHEBI:49883"/>
        <note>4Fe-4S-S-AdoMet</note>
    </ligand>
</feature>
<feature type="binding site" evidence="1">
    <location>
        <position position="68"/>
    </location>
    <ligand>
        <name>[4Fe-4S] cluster</name>
        <dbReference type="ChEBI" id="CHEBI:49883"/>
        <note>4Fe-4S-S-AdoMet</note>
    </ligand>
</feature>
<feature type="binding site" evidence="1">
    <location>
        <position position="71"/>
    </location>
    <ligand>
        <name>[4Fe-4S] cluster</name>
        <dbReference type="ChEBI" id="CHEBI:49883"/>
        <note>4Fe-4S-S-AdoMet</note>
    </ligand>
</feature>
<feature type="binding site" evidence="1">
    <location>
        <position position="108"/>
    </location>
    <ligand>
        <name>[2Fe-2S] cluster</name>
        <dbReference type="ChEBI" id="CHEBI:190135"/>
    </ligand>
</feature>
<feature type="binding site" evidence="1">
    <location>
        <position position="140"/>
    </location>
    <ligand>
        <name>[2Fe-2S] cluster</name>
        <dbReference type="ChEBI" id="CHEBI:190135"/>
    </ligand>
</feature>
<feature type="binding site" evidence="1">
    <location>
        <position position="200"/>
    </location>
    <ligand>
        <name>[2Fe-2S] cluster</name>
        <dbReference type="ChEBI" id="CHEBI:190135"/>
    </ligand>
</feature>
<feature type="binding site" evidence="1">
    <location>
        <position position="270"/>
    </location>
    <ligand>
        <name>[2Fe-2S] cluster</name>
        <dbReference type="ChEBI" id="CHEBI:190135"/>
    </ligand>
</feature>
<reference key="1">
    <citation type="journal article" date="2008" name="J. Bacteriol.">
        <title>Complete genome sequence of the mosquitocidal bacterium Bacillus sphaericus C3-41 and comparison with those of closely related Bacillus species.</title>
        <authorList>
            <person name="Hu X."/>
            <person name="Fan W."/>
            <person name="Han B."/>
            <person name="Liu H."/>
            <person name="Zheng D."/>
            <person name="Li Q."/>
            <person name="Dong W."/>
            <person name="Yan J."/>
            <person name="Gao M."/>
            <person name="Berry C."/>
            <person name="Yuan Z."/>
        </authorList>
    </citation>
    <scope>NUCLEOTIDE SEQUENCE [LARGE SCALE GENOMIC DNA]</scope>
    <source>
        <strain>C3-41</strain>
    </source>
</reference>
<dbReference type="EC" id="2.8.1.6" evidence="1"/>
<dbReference type="EMBL" id="CP000817">
    <property type="protein sequence ID" value="ACA40956.1"/>
    <property type="molecule type" value="Genomic_DNA"/>
</dbReference>
<dbReference type="RefSeq" id="WP_012295017.1">
    <property type="nucleotide sequence ID" value="NC_010382.1"/>
</dbReference>
<dbReference type="SMR" id="B1HRT3"/>
<dbReference type="EnsemblBacteria" id="ACA40956">
    <property type="protein sequence ID" value="ACA40956"/>
    <property type="gene ID" value="Bsph_3466"/>
</dbReference>
<dbReference type="KEGG" id="lsp:Bsph_3466"/>
<dbReference type="HOGENOM" id="CLU_033172_2_1_9"/>
<dbReference type="UniPathway" id="UPA00078">
    <property type="reaction ID" value="UER00162"/>
</dbReference>
<dbReference type="Proteomes" id="UP000002164">
    <property type="component" value="Chromosome"/>
</dbReference>
<dbReference type="GO" id="GO:0051537">
    <property type="term" value="F:2 iron, 2 sulfur cluster binding"/>
    <property type="evidence" value="ECO:0007669"/>
    <property type="project" value="UniProtKB-KW"/>
</dbReference>
<dbReference type="GO" id="GO:0051539">
    <property type="term" value="F:4 iron, 4 sulfur cluster binding"/>
    <property type="evidence" value="ECO:0007669"/>
    <property type="project" value="UniProtKB-KW"/>
</dbReference>
<dbReference type="GO" id="GO:0004076">
    <property type="term" value="F:biotin synthase activity"/>
    <property type="evidence" value="ECO:0007669"/>
    <property type="project" value="UniProtKB-UniRule"/>
</dbReference>
<dbReference type="GO" id="GO:0005506">
    <property type="term" value="F:iron ion binding"/>
    <property type="evidence" value="ECO:0007669"/>
    <property type="project" value="UniProtKB-UniRule"/>
</dbReference>
<dbReference type="GO" id="GO:0009102">
    <property type="term" value="P:biotin biosynthetic process"/>
    <property type="evidence" value="ECO:0007669"/>
    <property type="project" value="UniProtKB-UniRule"/>
</dbReference>
<dbReference type="CDD" id="cd01335">
    <property type="entry name" value="Radical_SAM"/>
    <property type="match status" value="1"/>
</dbReference>
<dbReference type="FunFam" id="3.20.20.70:FF:000026">
    <property type="entry name" value="Biotin synthase"/>
    <property type="match status" value="1"/>
</dbReference>
<dbReference type="Gene3D" id="3.20.20.70">
    <property type="entry name" value="Aldolase class I"/>
    <property type="match status" value="1"/>
</dbReference>
<dbReference type="HAMAP" id="MF_01694">
    <property type="entry name" value="BioB"/>
    <property type="match status" value="1"/>
</dbReference>
<dbReference type="InterPro" id="IPR013785">
    <property type="entry name" value="Aldolase_TIM"/>
</dbReference>
<dbReference type="InterPro" id="IPR010722">
    <property type="entry name" value="BATS_dom"/>
</dbReference>
<dbReference type="InterPro" id="IPR002684">
    <property type="entry name" value="Biotin_synth/BioAB"/>
</dbReference>
<dbReference type="InterPro" id="IPR024177">
    <property type="entry name" value="Biotin_synthase"/>
</dbReference>
<dbReference type="InterPro" id="IPR006638">
    <property type="entry name" value="Elp3/MiaA/NifB-like_rSAM"/>
</dbReference>
<dbReference type="InterPro" id="IPR007197">
    <property type="entry name" value="rSAM"/>
</dbReference>
<dbReference type="NCBIfam" id="TIGR00433">
    <property type="entry name" value="bioB"/>
    <property type="match status" value="1"/>
</dbReference>
<dbReference type="PANTHER" id="PTHR22976">
    <property type="entry name" value="BIOTIN SYNTHASE"/>
    <property type="match status" value="1"/>
</dbReference>
<dbReference type="PANTHER" id="PTHR22976:SF2">
    <property type="entry name" value="BIOTIN SYNTHASE, MITOCHONDRIAL"/>
    <property type="match status" value="1"/>
</dbReference>
<dbReference type="Pfam" id="PF06968">
    <property type="entry name" value="BATS"/>
    <property type="match status" value="1"/>
</dbReference>
<dbReference type="Pfam" id="PF04055">
    <property type="entry name" value="Radical_SAM"/>
    <property type="match status" value="1"/>
</dbReference>
<dbReference type="PIRSF" id="PIRSF001619">
    <property type="entry name" value="Biotin_synth"/>
    <property type="match status" value="1"/>
</dbReference>
<dbReference type="SFLD" id="SFLDG01060">
    <property type="entry name" value="BATS_domain_containing"/>
    <property type="match status" value="1"/>
</dbReference>
<dbReference type="SFLD" id="SFLDG01278">
    <property type="entry name" value="biotin_synthase_like"/>
    <property type="match status" value="1"/>
</dbReference>
<dbReference type="SMART" id="SM00876">
    <property type="entry name" value="BATS"/>
    <property type="match status" value="1"/>
</dbReference>
<dbReference type="SMART" id="SM00729">
    <property type="entry name" value="Elp3"/>
    <property type="match status" value="1"/>
</dbReference>
<dbReference type="SUPFAM" id="SSF102114">
    <property type="entry name" value="Radical SAM enzymes"/>
    <property type="match status" value="1"/>
</dbReference>
<dbReference type="PROSITE" id="PS51918">
    <property type="entry name" value="RADICAL_SAM"/>
    <property type="match status" value="1"/>
</dbReference>
<sequence>MNFLQVAQEVIDGKIISNEEALAILNSKDDELLQLMDGAFAIRRHYYGKKVKLNMIMNAKSGYCPEDCGYCSQSSKSTAPIEKYPFITKEEILAGAKRAFDNKIGTYCIVASGRGPTRKDVNVVSEAVVEIKEKYGLKVCACLGLLKEEQAQQLKEAGVDRYNHNLNTSERHHSFITTSHTYEDRVNTVEIVKKHGISPCSGAIIGMKETKEDVVNIARALHQLDADSIPVNFLNAIDGTKLEGTKDLNPRYCLKVLALFRYINPTKEIRISGGREINLGCLQPLGLYAANSIFVGDYLTTAGQEANSDYRMLEDLGFEIELTQKQEAAFC</sequence>
<accession>B1HRT3</accession>
<comment type="function">
    <text evidence="1">Catalyzes the conversion of dethiobiotin (DTB) to biotin by the insertion of a sulfur atom into dethiobiotin via a radical-based mechanism.</text>
</comment>
<comment type="catalytic activity">
    <reaction evidence="1">
        <text>(4R,5S)-dethiobiotin + (sulfur carrier)-SH + 2 reduced [2Fe-2S]-[ferredoxin] + 2 S-adenosyl-L-methionine = (sulfur carrier)-H + biotin + 2 5'-deoxyadenosine + 2 L-methionine + 2 oxidized [2Fe-2S]-[ferredoxin]</text>
        <dbReference type="Rhea" id="RHEA:22060"/>
        <dbReference type="Rhea" id="RHEA-COMP:10000"/>
        <dbReference type="Rhea" id="RHEA-COMP:10001"/>
        <dbReference type="Rhea" id="RHEA-COMP:14737"/>
        <dbReference type="Rhea" id="RHEA-COMP:14739"/>
        <dbReference type="ChEBI" id="CHEBI:17319"/>
        <dbReference type="ChEBI" id="CHEBI:29917"/>
        <dbReference type="ChEBI" id="CHEBI:33737"/>
        <dbReference type="ChEBI" id="CHEBI:33738"/>
        <dbReference type="ChEBI" id="CHEBI:57586"/>
        <dbReference type="ChEBI" id="CHEBI:57844"/>
        <dbReference type="ChEBI" id="CHEBI:59789"/>
        <dbReference type="ChEBI" id="CHEBI:64428"/>
        <dbReference type="ChEBI" id="CHEBI:149473"/>
        <dbReference type="EC" id="2.8.1.6"/>
    </reaction>
</comment>
<comment type="cofactor">
    <cofactor evidence="1">
        <name>[4Fe-4S] cluster</name>
        <dbReference type="ChEBI" id="CHEBI:49883"/>
    </cofactor>
    <text evidence="1">Binds 1 [4Fe-4S] cluster. The cluster is coordinated with 3 cysteines and an exchangeable S-adenosyl-L-methionine.</text>
</comment>
<comment type="cofactor">
    <cofactor evidence="1">
        <name>[2Fe-2S] cluster</name>
        <dbReference type="ChEBI" id="CHEBI:190135"/>
    </cofactor>
    <text evidence="1">Binds 1 [2Fe-2S] cluster. The cluster is coordinated with 3 cysteines and 1 arginine.</text>
</comment>
<comment type="pathway">
    <text evidence="1">Cofactor biosynthesis; biotin biosynthesis; biotin from 7,8-diaminononanoate: step 2/2.</text>
</comment>
<comment type="subunit">
    <text evidence="1">Homodimer.</text>
</comment>
<comment type="similarity">
    <text evidence="1">Belongs to the radical SAM superfamily. Biotin synthase family.</text>
</comment>
<gene>
    <name evidence="1" type="primary">bioB</name>
    <name type="ordered locus">Bsph_3466</name>
</gene>
<evidence type="ECO:0000255" key="1">
    <source>
        <dbReference type="HAMAP-Rule" id="MF_01694"/>
    </source>
</evidence>
<evidence type="ECO:0000255" key="2">
    <source>
        <dbReference type="PROSITE-ProRule" id="PRU01266"/>
    </source>
</evidence>
<organism>
    <name type="scientific">Lysinibacillus sphaericus (strain C3-41)</name>
    <dbReference type="NCBI Taxonomy" id="444177"/>
    <lineage>
        <taxon>Bacteria</taxon>
        <taxon>Bacillati</taxon>
        <taxon>Bacillota</taxon>
        <taxon>Bacilli</taxon>
        <taxon>Bacillales</taxon>
        <taxon>Bacillaceae</taxon>
        <taxon>Lysinibacillus</taxon>
    </lineage>
</organism>
<proteinExistence type="inferred from homology"/>
<protein>
    <recommendedName>
        <fullName evidence="1">Biotin synthase</fullName>
        <ecNumber evidence="1">2.8.1.6</ecNumber>
    </recommendedName>
</protein>
<keyword id="KW-0001">2Fe-2S</keyword>
<keyword id="KW-0004">4Fe-4S</keyword>
<keyword id="KW-0093">Biotin biosynthesis</keyword>
<keyword id="KW-0408">Iron</keyword>
<keyword id="KW-0411">Iron-sulfur</keyword>
<keyword id="KW-0479">Metal-binding</keyword>
<keyword id="KW-0949">S-adenosyl-L-methionine</keyword>
<keyword id="KW-0808">Transferase</keyword>